<name>EX7S_LISIN</name>
<accession>Q92BZ2</accession>
<evidence type="ECO:0000255" key="1">
    <source>
        <dbReference type="HAMAP-Rule" id="MF_00337"/>
    </source>
</evidence>
<comment type="function">
    <text evidence="1">Bidirectionally degrades single-stranded DNA into large acid-insoluble oligonucleotides, which are then degraded further into small acid-soluble oligonucleotides.</text>
</comment>
<comment type="catalytic activity">
    <reaction evidence="1">
        <text>Exonucleolytic cleavage in either 5'- to 3'- or 3'- to 5'-direction to yield nucleoside 5'-phosphates.</text>
        <dbReference type="EC" id="3.1.11.6"/>
    </reaction>
</comment>
<comment type="subunit">
    <text evidence="1">Heterooligomer composed of large and small subunits.</text>
</comment>
<comment type="subcellular location">
    <subcellularLocation>
        <location evidence="1">Cytoplasm</location>
    </subcellularLocation>
</comment>
<comment type="similarity">
    <text evidence="1">Belongs to the XseB family.</text>
</comment>
<gene>
    <name evidence="1" type="primary">xseB</name>
    <name type="ordered locus">lin1399</name>
</gene>
<sequence>MATKKKTFEEAIAELETIVEALENGSASLEDSLDMYQKGIELTKLCQDKLQSAEQRMAKVVTEAGEEIPFEADGE</sequence>
<reference key="1">
    <citation type="journal article" date="2001" name="Science">
        <title>Comparative genomics of Listeria species.</title>
        <authorList>
            <person name="Glaser P."/>
            <person name="Frangeul L."/>
            <person name="Buchrieser C."/>
            <person name="Rusniok C."/>
            <person name="Amend A."/>
            <person name="Baquero F."/>
            <person name="Berche P."/>
            <person name="Bloecker H."/>
            <person name="Brandt P."/>
            <person name="Chakraborty T."/>
            <person name="Charbit A."/>
            <person name="Chetouani F."/>
            <person name="Couve E."/>
            <person name="de Daruvar A."/>
            <person name="Dehoux P."/>
            <person name="Domann E."/>
            <person name="Dominguez-Bernal G."/>
            <person name="Duchaud E."/>
            <person name="Durant L."/>
            <person name="Dussurget O."/>
            <person name="Entian K.-D."/>
            <person name="Fsihi H."/>
            <person name="Garcia-del Portillo F."/>
            <person name="Garrido P."/>
            <person name="Gautier L."/>
            <person name="Goebel W."/>
            <person name="Gomez-Lopez N."/>
            <person name="Hain T."/>
            <person name="Hauf J."/>
            <person name="Jackson D."/>
            <person name="Jones L.-M."/>
            <person name="Kaerst U."/>
            <person name="Kreft J."/>
            <person name="Kuhn M."/>
            <person name="Kunst F."/>
            <person name="Kurapkat G."/>
            <person name="Madueno E."/>
            <person name="Maitournam A."/>
            <person name="Mata Vicente J."/>
            <person name="Ng E."/>
            <person name="Nedjari H."/>
            <person name="Nordsiek G."/>
            <person name="Novella S."/>
            <person name="de Pablos B."/>
            <person name="Perez-Diaz J.-C."/>
            <person name="Purcell R."/>
            <person name="Remmel B."/>
            <person name="Rose M."/>
            <person name="Schlueter T."/>
            <person name="Simoes N."/>
            <person name="Tierrez A."/>
            <person name="Vazquez-Boland J.-A."/>
            <person name="Voss H."/>
            <person name="Wehland J."/>
            <person name="Cossart P."/>
        </authorList>
    </citation>
    <scope>NUCLEOTIDE SEQUENCE [LARGE SCALE GENOMIC DNA]</scope>
    <source>
        <strain>ATCC BAA-680 / CLIP 11262</strain>
    </source>
</reference>
<keyword id="KW-0963">Cytoplasm</keyword>
<keyword id="KW-0269">Exonuclease</keyword>
<keyword id="KW-0378">Hydrolase</keyword>
<keyword id="KW-0540">Nuclease</keyword>
<organism>
    <name type="scientific">Listeria innocua serovar 6a (strain ATCC BAA-680 / CLIP 11262)</name>
    <dbReference type="NCBI Taxonomy" id="272626"/>
    <lineage>
        <taxon>Bacteria</taxon>
        <taxon>Bacillati</taxon>
        <taxon>Bacillota</taxon>
        <taxon>Bacilli</taxon>
        <taxon>Bacillales</taxon>
        <taxon>Listeriaceae</taxon>
        <taxon>Listeria</taxon>
    </lineage>
</organism>
<dbReference type="EC" id="3.1.11.6" evidence="1"/>
<dbReference type="EMBL" id="AL596168">
    <property type="protein sequence ID" value="CAC96630.1"/>
    <property type="molecule type" value="Genomic_DNA"/>
</dbReference>
<dbReference type="PIR" id="AF1607">
    <property type="entry name" value="AF1607"/>
</dbReference>
<dbReference type="RefSeq" id="WP_003762111.1">
    <property type="nucleotide sequence ID" value="NC_003212.1"/>
</dbReference>
<dbReference type="SMR" id="Q92BZ2"/>
<dbReference type="STRING" id="272626.gene:17565730"/>
<dbReference type="KEGG" id="lin:lin1399"/>
<dbReference type="eggNOG" id="COG1722">
    <property type="taxonomic scope" value="Bacteria"/>
</dbReference>
<dbReference type="HOGENOM" id="CLU_145918_3_1_9"/>
<dbReference type="OrthoDB" id="9798666at2"/>
<dbReference type="Proteomes" id="UP000002513">
    <property type="component" value="Chromosome"/>
</dbReference>
<dbReference type="GO" id="GO:0005829">
    <property type="term" value="C:cytosol"/>
    <property type="evidence" value="ECO:0007669"/>
    <property type="project" value="TreeGrafter"/>
</dbReference>
<dbReference type="GO" id="GO:0009318">
    <property type="term" value="C:exodeoxyribonuclease VII complex"/>
    <property type="evidence" value="ECO:0007669"/>
    <property type="project" value="InterPro"/>
</dbReference>
<dbReference type="GO" id="GO:0008855">
    <property type="term" value="F:exodeoxyribonuclease VII activity"/>
    <property type="evidence" value="ECO:0007669"/>
    <property type="project" value="UniProtKB-UniRule"/>
</dbReference>
<dbReference type="GO" id="GO:0006308">
    <property type="term" value="P:DNA catabolic process"/>
    <property type="evidence" value="ECO:0007669"/>
    <property type="project" value="UniProtKB-UniRule"/>
</dbReference>
<dbReference type="FunFam" id="1.10.287.1040:FF:000008">
    <property type="entry name" value="Exodeoxyribonuclease 7 small subunit"/>
    <property type="match status" value="1"/>
</dbReference>
<dbReference type="Gene3D" id="1.10.287.1040">
    <property type="entry name" value="Exonuclease VII, small subunit"/>
    <property type="match status" value="1"/>
</dbReference>
<dbReference type="HAMAP" id="MF_00337">
    <property type="entry name" value="Exonuc_7_S"/>
    <property type="match status" value="1"/>
</dbReference>
<dbReference type="InterPro" id="IPR003761">
    <property type="entry name" value="Exonuc_VII_S"/>
</dbReference>
<dbReference type="InterPro" id="IPR037004">
    <property type="entry name" value="Exonuc_VII_ssu_sf"/>
</dbReference>
<dbReference type="NCBIfam" id="NF002138">
    <property type="entry name" value="PRK00977.1-2"/>
    <property type="match status" value="1"/>
</dbReference>
<dbReference type="NCBIfam" id="NF002139">
    <property type="entry name" value="PRK00977.1-3"/>
    <property type="match status" value="1"/>
</dbReference>
<dbReference type="NCBIfam" id="NF002140">
    <property type="entry name" value="PRK00977.1-4"/>
    <property type="match status" value="1"/>
</dbReference>
<dbReference type="NCBIfam" id="NF010667">
    <property type="entry name" value="PRK14064.1"/>
    <property type="match status" value="1"/>
</dbReference>
<dbReference type="NCBIfam" id="TIGR01280">
    <property type="entry name" value="xseB"/>
    <property type="match status" value="1"/>
</dbReference>
<dbReference type="PANTHER" id="PTHR34137">
    <property type="entry name" value="EXODEOXYRIBONUCLEASE 7 SMALL SUBUNIT"/>
    <property type="match status" value="1"/>
</dbReference>
<dbReference type="PANTHER" id="PTHR34137:SF1">
    <property type="entry name" value="EXODEOXYRIBONUCLEASE 7 SMALL SUBUNIT"/>
    <property type="match status" value="1"/>
</dbReference>
<dbReference type="Pfam" id="PF02609">
    <property type="entry name" value="Exonuc_VII_S"/>
    <property type="match status" value="1"/>
</dbReference>
<dbReference type="PIRSF" id="PIRSF006488">
    <property type="entry name" value="Exonuc_VII_S"/>
    <property type="match status" value="1"/>
</dbReference>
<dbReference type="SUPFAM" id="SSF116842">
    <property type="entry name" value="XseB-like"/>
    <property type="match status" value="1"/>
</dbReference>
<feature type="chain" id="PRO_0000206967" description="Exodeoxyribonuclease 7 small subunit">
    <location>
        <begin position="1"/>
        <end position="75"/>
    </location>
</feature>
<proteinExistence type="inferred from homology"/>
<protein>
    <recommendedName>
        <fullName evidence="1">Exodeoxyribonuclease 7 small subunit</fullName>
        <ecNumber evidence="1">3.1.11.6</ecNumber>
    </recommendedName>
    <alternativeName>
        <fullName evidence="1">Exodeoxyribonuclease VII small subunit</fullName>
        <shortName evidence="1">Exonuclease VII small subunit</shortName>
    </alternativeName>
</protein>